<feature type="signal peptide" evidence="2">
    <location>
        <begin position="1"/>
        <end position="16"/>
    </location>
</feature>
<feature type="chain" id="PRO_0000020313" description="SPARC-like protein 1">
    <location>
        <begin position="17"/>
        <end position="650"/>
    </location>
</feature>
<feature type="domain" description="Follistatin-like">
    <location>
        <begin position="418"/>
        <end position="440"/>
    </location>
</feature>
<feature type="domain" description="Kazal-like" evidence="4">
    <location>
        <begin position="436"/>
        <end position="497"/>
    </location>
</feature>
<feature type="domain" description="EF-hand" evidence="3">
    <location>
        <begin position="608"/>
        <end position="643"/>
    </location>
</feature>
<feature type="region of interest" description="Disordered" evidence="5">
    <location>
        <begin position="51"/>
        <end position="352"/>
    </location>
</feature>
<feature type="region of interest" description="Disordered" evidence="5">
    <location>
        <begin position="375"/>
        <end position="415"/>
    </location>
</feature>
<feature type="compositionally biased region" description="Basic and acidic residues" evidence="5">
    <location>
        <begin position="54"/>
        <end position="64"/>
    </location>
</feature>
<feature type="compositionally biased region" description="Basic and acidic residues" evidence="5">
    <location>
        <begin position="75"/>
        <end position="85"/>
    </location>
</feature>
<feature type="compositionally biased region" description="Acidic residues" evidence="5">
    <location>
        <begin position="91"/>
        <end position="101"/>
    </location>
</feature>
<feature type="compositionally biased region" description="Polar residues" evidence="5">
    <location>
        <begin position="116"/>
        <end position="126"/>
    </location>
</feature>
<feature type="compositionally biased region" description="Polar residues" evidence="5">
    <location>
        <begin position="135"/>
        <end position="148"/>
    </location>
</feature>
<feature type="compositionally biased region" description="Polar residues" evidence="5">
    <location>
        <begin position="157"/>
        <end position="174"/>
    </location>
</feature>
<feature type="compositionally biased region" description="Acidic residues" evidence="5">
    <location>
        <begin position="189"/>
        <end position="210"/>
    </location>
</feature>
<feature type="compositionally biased region" description="Basic and acidic residues" evidence="5">
    <location>
        <begin position="277"/>
        <end position="299"/>
    </location>
</feature>
<feature type="compositionally biased region" description="Basic and acidic residues" evidence="5">
    <location>
        <begin position="382"/>
        <end position="398"/>
    </location>
</feature>
<feature type="binding site" evidence="3">
    <location>
        <position position="621"/>
    </location>
    <ligand>
        <name>Ca(2+)</name>
        <dbReference type="ChEBI" id="CHEBI:29108"/>
    </ligand>
</feature>
<feature type="binding site" evidence="3">
    <location>
        <position position="623"/>
    </location>
    <ligand>
        <name>Ca(2+)</name>
        <dbReference type="ChEBI" id="CHEBI:29108"/>
    </ligand>
</feature>
<feature type="binding site" evidence="3">
    <location>
        <position position="625"/>
    </location>
    <ligand>
        <name>Ca(2+)</name>
        <dbReference type="ChEBI" id="CHEBI:29108"/>
    </ligand>
</feature>
<feature type="binding site" evidence="3">
    <location>
        <position position="627"/>
    </location>
    <ligand>
        <name>Ca(2+)</name>
        <dbReference type="ChEBI" id="CHEBI:29108"/>
    </ligand>
</feature>
<feature type="binding site" evidence="3">
    <location>
        <position position="632"/>
    </location>
    <ligand>
        <name>Ca(2+)</name>
        <dbReference type="ChEBI" id="CHEBI:29108"/>
    </ligand>
</feature>
<feature type="modified residue" description="Phosphoserine" evidence="1">
    <location>
        <position position="70"/>
    </location>
</feature>
<feature type="modified residue" description="Phosphoserine" evidence="1">
    <location>
        <position position="78"/>
    </location>
</feature>
<feature type="modified residue" description="Phosphoserine" evidence="1">
    <location>
        <position position="86"/>
    </location>
</feature>
<feature type="modified residue" description="Phosphoserine" evidence="1">
    <location>
        <position position="155"/>
    </location>
</feature>
<feature type="modified residue" description="Phosphoserine" evidence="1">
    <location>
        <position position="163"/>
    </location>
</feature>
<feature type="modified residue" description="Phosphoserine" evidence="1">
    <location>
        <position position="272"/>
    </location>
</feature>
<feature type="modified residue" description="Phosphoserine" evidence="7">
    <location>
        <position position="353"/>
    </location>
</feature>
<feature type="modified residue" description="Phosphoserine" evidence="7">
    <location>
        <position position="406"/>
    </location>
</feature>
<feature type="glycosylation site" description="N-linked (GlcNAc...) asparagine" evidence="2">
    <location>
        <position position="148"/>
    </location>
</feature>
<feature type="glycosylation site" description="N-linked (GlcNAc...) asparagine" evidence="2">
    <location>
        <position position="168"/>
    </location>
</feature>
<feature type="glycosylation site" description="N-linked (GlcNAc...) asparagine" evidence="2">
    <location>
        <position position="462"/>
    </location>
</feature>
<feature type="disulfide bond" evidence="4">
    <location>
        <begin position="419"/>
        <end position="430"/>
    </location>
</feature>
<feature type="disulfide bond" evidence="4">
    <location>
        <begin position="424"/>
        <end position="440"/>
    </location>
</feature>
<feature type="disulfide bond" evidence="4">
    <location>
        <begin position="442"/>
        <end position="476"/>
    </location>
</feature>
<feature type="disulfide bond" evidence="4">
    <location>
        <begin position="448"/>
        <end position="469"/>
    </location>
</feature>
<feature type="disulfide bond" evidence="4">
    <location>
        <begin position="458"/>
        <end position="495"/>
    </location>
</feature>
<feature type="disulfide bond" evidence="4">
    <location>
        <begin position="501"/>
        <end position="612"/>
    </location>
</feature>
<feature type="disulfide bond" evidence="4">
    <location>
        <begin position="620"/>
        <end position="636"/>
    </location>
</feature>
<feature type="sequence conflict" description="In Ref. 2; AAC53172." evidence="6" ref="2">
    <original>S</original>
    <variation>F</variation>
    <location>
        <position position="25"/>
    </location>
</feature>
<feature type="sequence conflict" description="In Ref. 1; AAB06444/AAB08451, 2; AAC53172 and 4; AAH03759." evidence="6" ref="1 2 4">
    <original>S</original>
    <variation>N</variation>
    <location>
        <position position="59"/>
    </location>
</feature>
<feature type="sequence conflict" description="In Ref. 1; AAB06444/AAB08451." evidence="6" ref="1">
    <original>D</original>
    <variation>E</variation>
    <location>
        <position position="199"/>
    </location>
</feature>
<feature type="sequence conflict" description="In Ref. 1; AAB06444/AAB08451." evidence="6" ref="1">
    <original>A</original>
    <variation>S</variation>
    <location>
        <position position="281"/>
    </location>
</feature>
<feature type="sequence conflict" description="In Ref. 1; AAB06444/AAB08451." evidence="6" ref="1">
    <original>R</original>
    <variation>Q</variation>
    <location>
        <position position="385"/>
    </location>
</feature>
<protein>
    <recommendedName>
        <fullName>SPARC-like protein 1</fullName>
    </recommendedName>
    <alternativeName>
        <fullName>Extracellular matrix protein 2</fullName>
    </alternativeName>
    <alternativeName>
        <fullName>Matrix glycoprotein Sc1</fullName>
    </alternativeName>
</protein>
<dbReference type="EMBL" id="U66166">
    <property type="protein sequence ID" value="AAB06444.1"/>
    <property type="molecule type" value="Genomic_DNA"/>
</dbReference>
<dbReference type="EMBL" id="U66158">
    <property type="protein sequence ID" value="AAB06444.1"/>
    <property type="status" value="JOINED"/>
    <property type="molecule type" value="Genomic_DNA"/>
</dbReference>
<dbReference type="EMBL" id="U66159">
    <property type="protein sequence ID" value="AAB06444.1"/>
    <property type="status" value="JOINED"/>
    <property type="molecule type" value="Genomic_DNA"/>
</dbReference>
<dbReference type="EMBL" id="U66160">
    <property type="protein sequence ID" value="AAB06444.1"/>
    <property type="status" value="JOINED"/>
    <property type="molecule type" value="Genomic_DNA"/>
</dbReference>
<dbReference type="EMBL" id="U66161">
    <property type="protein sequence ID" value="AAB06444.1"/>
    <property type="status" value="JOINED"/>
    <property type="molecule type" value="Genomic_DNA"/>
</dbReference>
<dbReference type="EMBL" id="U66162">
    <property type="protein sequence ID" value="AAB06444.1"/>
    <property type="status" value="JOINED"/>
    <property type="molecule type" value="Genomic_DNA"/>
</dbReference>
<dbReference type="EMBL" id="U66163">
    <property type="protein sequence ID" value="AAB06444.1"/>
    <property type="status" value="JOINED"/>
    <property type="molecule type" value="Genomic_DNA"/>
</dbReference>
<dbReference type="EMBL" id="U66164">
    <property type="protein sequence ID" value="AAB06444.1"/>
    <property type="status" value="JOINED"/>
    <property type="molecule type" value="Genomic_DNA"/>
</dbReference>
<dbReference type="EMBL" id="U66165">
    <property type="protein sequence ID" value="AAB06444.1"/>
    <property type="status" value="JOINED"/>
    <property type="molecule type" value="Genomic_DNA"/>
</dbReference>
<dbReference type="EMBL" id="U77330">
    <property type="protein sequence ID" value="AAC53172.1"/>
    <property type="molecule type" value="mRNA"/>
</dbReference>
<dbReference type="EMBL" id="U64827">
    <property type="protein sequence ID" value="AAB08451.1"/>
    <property type="molecule type" value="mRNA"/>
</dbReference>
<dbReference type="EMBL" id="AL714024">
    <property type="status" value="NOT_ANNOTATED_CDS"/>
    <property type="molecule type" value="Genomic_DNA"/>
</dbReference>
<dbReference type="EMBL" id="BC003759">
    <property type="protein sequence ID" value="AAH03759.1"/>
    <property type="molecule type" value="mRNA"/>
</dbReference>
<dbReference type="CCDS" id="CCDS19483.1"/>
<dbReference type="RefSeq" id="NP_001345943.1">
    <property type="nucleotide sequence ID" value="NM_001359014.1"/>
</dbReference>
<dbReference type="RefSeq" id="NP_001345945.1">
    <property type="nucleotide sequence ID" value="NM_001359016.1"/>
</dbReference>
<dbReference type="RefSeq" id="NP_034227.3">
    <property type="nucleotide sequence ID" value="NM_010097.4"/>
</dbReference>
<dbReference type="RefSeq" id="XP_006534831.1">
    <property type="nucleotide sequence ID" value="XM_006534768.1"/>
</dbReference>
<dbReference type="RefSeq" id="XP_017176145.1">
    <property type="nucleotide sequence ID" value="XM_017320656.1"/>
</dbReference>
<dbReference type="RefSeq" id="XP_036020670.1">
    <property type="nucleotide sequence ID" value="XM_036164777.1"/>
</dbReference>
<dbReference type="SMR" id="P70663"/>
<dbReference type="BioGRID" id="199367">
    <property type="interactions" value="3"/>
</dbReference>
<dbReference type="FunCoup" id="P70663">
    <property type="interactions" value="64"/>
</dbReference>
<dbReference type="IntAct" id="P70663">
    <property type="interactions" value="4"/>
</dbReference>
<dbReference type="MINT" id="P70663"/>
<dbReference type="STRING" id="10090.ENSMUSP00000031249"/>
<dbReference type="GlyConnect" id="2737">
    <property type="glycosylation" value="9 N-Linked glycans (2 sites)"/>
</dbReference>
<dbReference type="GlyCosmos" id="P70663">
    <property type="glycosylation" value="3 sites, 9 glycans"/>
</dbReference>
<dbReference type="GlyGen" id="P70663">
    <property type="glycosylation" value="5 sites, 10 N-linked glycans (2 sites), 1 O-linked glycan (1 site)"/>
</dbReference>
<dbReference type="iPTMnet" id="P70663"/>
<dbReference type="PhosphoSitePlus" id="P70663"/>
<dbReference type="SwissPalm" id="P70663"/>
<dbReference type="CPTAC" id="non-CPTAC-3616"/>
<dbReference type="jPOST" id="P70663"/>
<dbReference type="PaxDb" id="10090-ENSMUSP00000031249"/>
<dbReference type="PeptideAtlas" id="P70663"/>
<dbReference type="ProteomicsDB" id="263328"/>
<dbReference type="Antibodypedia" id="25430">
    <property type="antibodies" value="277 antibodies from 32 providers"/>
</dbReference>
<dbReference type="DNASU" id="13602"/>
<dbReference type="Ensembl" id="ENSMUST00000031249.8">
    <property type="protein sequence ID" value="ENSMUSP00000031249.4"/>
    <property type="gene ID" value="ENSMUSG00000029309.8"/>
</dbReference>
<dbReference type="GeneID" id="13602"/>
<dbReference type="KEGG" id="mmu:13602"/>
<dbReference type="UCSC" id="uc008ykb.2">
    <property type="organism name" value="mouse"/>
</dbReference>
<dbReference type="AGR" id="MGI:108110"/>
<dbReference type="CTD" id="8404"/>
<dbReference type="MGI" id="MGI:108110">
    <property type="gene designation" value="Sparcl1"/>
</dbReference>
<dbReference type="VEuPathDB" id="HostDB:ENSMUSG00000029309"/>
<dbReference type="eggNOG" id="KOG4004">
    <property type="taxonomic scope" value="Eukaryota"/>
</dbReference>
<dbReference type="GeneTree" id="ENSGT00510000046787"/>
<dbReference type="HOGENOM" id="CLU_026297_0_1_1"/>
<dbReference type="InParanoid" id="P70663"/>
<dbReference type="OMA" id="QCKRGHV"/>
<dbReference type="OrthoDB" id="9972865at2759"/>
<dbReference type="PhylomeDB" id="P70663"/>
<dbReference type="TreeFam" id="TF319356"/>
<dbReference type="Reactome" id="R-MMU-381426">
    <property type="pathway name" value="Regulation of Insulin-like Growth Factor (IGF) transport and uptake by Insulin-like Growth Factor Binding Proteins (IGFBPs)"/>
</dbReference>
<dbReference type="Reactome" id="R-MMU-8957275">
    <property type="pathway name" value="Post-translational protein phosphorylation"/>
</dbReference>
<dbReference type="BioGRID-ORCS" id="13602">
    <property type="hits" value="5 hits in 76 CRISPR screens"/>
</dbReference>
<dbReference type="ChiTaRS" id="Sparcl1">
    <property type="organism name" value="mouse"/>
</dbReference>
<dbReference type="PRO" id="PR:P70663"/>
<dbReference type="Proteomes" id="UP000000589">
    <property type="component" value="Chromosome 5"/>
</dbReference>
<dbReference type="RNAct" id="P70663">
    <property type="molecule type" value="protein"/>
</dbReference>
<dbReference type="Bgee" id="ENSMUSG00000029309">
    <property type="expression patterns" value="Expressed in cerebellar nuclear complex and 248 other cell types or tissues"/>
</dbReference>
<dbReference type="ExpressionAtlas" id="P70663">
    <property type="expression patterns" value="baseline and differential"/>
</dbReference>
<dbReference type="GO" id="GO:0005615">
    <property type="term" value="C:extracellular space"/>
    <property type="evidence" value="ECO:0007669"/>
    <property type="project" value="InterPro"/>
</dbReference>
<dbReference type="GO" id="GO:0098978">
    <property type="term" value="C:glutamatergic synapse"/>
    <property type="evidence" value="ECO:0000314"/>
    <property type="project" value="SynGO"/>
</dbReference>
<dbReference type="GO" id="GO:0005509">
    <property type="term" value="F:calcium ion binding"/>
    <property type="evidence" value="ECO:0007669"/>
    <property type="project" value="InterPro"/>
</dbReference>
<dbReference type="GO" id="GO:0007165">
    <property type="term" value="P:signal transduction"/>
    <property type="evidence" value="ECO:0007669"/>
    <property type="project" value="InterPro"/>
</dbReference>
<dbReference type="GO" id="GO:0099560">
    <property type="term" value="P:synaptic membrane adhesion"/>
    <property type="evidence" value="ECO:0000314"/>
    <property type="project" value="SynGO"/>
</dbReference>
<dbReference type="CDD" id="cd16231">
    <property type="entry name" value="EFh_SPARC_like"/>
    <property type="match status" value="1"/>
</dbReference>
<dbReference type="FunFam" id="1.10.238.10:FF:000068">
    <property type="entry name" value="SPARC isoform 1"/>
    <property type="match status" value="1"/>
</dbReference>
<dbReference type="FunFam" id="3.30.60.30:FF:000004">
    <property type="entry name" value="SPARC isoform 1"/>
    <property type="match status" value="1"/>
</dbReference>
<dbReference type="Gene3D" id="3.30.60.30">
    <property type="match status" value="1"/>
</dbReference>
<dbReference type="Gene3D" id="1.10.238.10">
    <property type="entry name" value="EF-hand"/>
    <property type="match status" value="1"/>
</dbReference>
<dbReference type="InterPro" id="IPR011992">
    <property type="entry name" value="EF-hand-dom_pair"/>
</dbReference>
<dbReference type="InterPro" id="IPR018247">
    <property type="entry name" value="EF_Hand_1_Ca_BS"/>
</dbReference>
<dbReference type="InterPro" id="IPR002048">
    <property type="entry name" value="EF_hand_dom"/>
</dbReference>
<dbReference type="InterPro" id="IPR003645">
    <property type="entry name" value="Fol_N"/>
</dbReference>
<dbReference type="InterPro" id="IPR015369">
    <property type="entry name" value="Follistatin/Osteonectin_EGF"/>
</dbReference>
<dbReference type="InterPro" id="IPR002350">
    <property type="entry name" value="Kazal_dom"/>
</dbReference>
<dbReference type="InterPro" id="IPR036058">
    <property type="entry name" value="Kazal_dom_sf"/>
</dbReference>
<dbReference type="InterPro" id="IPR001999">
    <property type="entry name" value="Osteonectin_CS"/>
</dbReference>
<dbReference type="InterPro" id="IPR016359">
    <property type="entry name" value="SPARC-like_p1"/>
</dbReference>
<dbReference type="InterPro" id="IPR019577">
    <property type="entry name" value="SPARC/Testican_Ca-bd-dom"/>
</dbReference>
<dbReference type="PANTHER" id="PTHR13866">
    <property type="entry name" value="SPARC OSTEONECTIN"/>
    <property type="match status" value="1"/>
</dbReference>
<dbReference type="PANTHER" id="PTHR13866:SF16">
    <property type="entry name" value="SPARC-LIKE PROTEIN 1"/>
    <property type="match status" value="1"/>
</dbReference>
<dbReference type="Pfam" id="PF09289">
    <property type="entry name" value="FOLN"/>
    <property type="match status" value="1"/>
</dbReference>
<dbReference type="Pfam" id="PF00050">
    <property type="entry name" value="Kazal_1"/>
    <property type="match status" value="1"/>
</dbReference>
<dbReference type="Pfam" id="PF10591">
    <property type="entry name" value="SPARC_Ca_bdg"/>
    <property type="match status" value="1"/>
</dbReference>
<dbReference type="PIRSF" id="PIRSF002574">
    <property type="entry name" value="SPARC-like_p1"/>
    <property type="match status" value="1"/>
</dbReference>
<dbReference type="SMART" id="SM00274">
    <property type="entry name" value="FOLN"/>
    <property type="match status" value="1"/>
</dbReference>
<dbReference type="SMART" id="SM00280">
    <property type="entry name" value="KAZAL"/>
    <property type="match status" value="1"/>
</dbReference>
<dbReference type="SUPFAM" id="SSF47473">
    <property type="entry name" value="EF-hand"/>
    <property type="match status" value="1"/>
</dbReference>
<dbReference type="SUPFAM" id="SSF100895">
    <property type="entry name" value="Kazal-type serine protease inhibitors"/>
    <property type="match status" value="1"/>
</dbReference>
<dbReference type="PROSITE" id="PS00018">
    <property type="entry name" value="EF_HAND_1"/>
    <property type="match status" value="1"/>
</dbReference>
<dbReference type="PROSITE" id="PS50222">
    <property type="entry name" value="EF_HAND_2"/>
    <property type="match status" value="1"/>
</dbReference>
<dbReference type="PROSITE" id="PS51465">
    <property type="entry name" value="KAZAL_2"/>
    <property type="match status" value="1"/>
</dbReference>
<dbReference type="PROSITE" id="PS00612">
    <property type="entry name" value="OSTEONECTIN_1"/>
    <property type="match status" value="1"/>
</dbReference>
<dbReference type="PROSITE" id="PS00613">
    <property type="entry name" value="OSTEONECTIN_2"/>
    <property type="match status" value="1"/>
</dbReference>
<gene>
    <name type="primary">Sparcl1</name>
    <name type="synonym">Ecm2</name>
    <name type="synonym">Sc1</name>
</gene>
<reference key="1">
    <citation type="journal article" date="1996" name="Genome Res.">
        <title>The exon structure of the mouse Sc1 gene is very similar to the mouse Sparc gene.</title>
        <authorList>
            <person name="McKinnon P.J."/>
            <person name="Kapsetaki M."/>
            <person name="Margolskee R.F."/>
        </authorList>
    </citation>
    <scope>NUCLEOTIDE SEQUENCE [GENOMIC DNA / MRNA]</scope>
    <source>
        <strain>129/SvJ</strain>
    </source>
</reference>
<reference key="2">
    <citation type="journal article" date="1997" name="J. Histochem. Cytochem.">
        <title>Cloning and expression of murine SC1, a gene product homologous to SPARC.</title>
        <authorList>
            <person name="Soderling J.A."/>
            <person name="Reed M.J."/>
            <person name="Corsa A."/>
            <person name="Sage E.H."/>
        </authorList>
    </citation>
    <scope>NUCLEOTIDE SEQUENCE [MRNA]</scope>
    <source>
        <tissue>Brain</tissue>
    </source>
</reference>
<reference key="3">
    <citation type="journal article" date="2009" name="PLoS Biol.">
        <title>Lineage-specific biology revealed by a finished genome assembly of the mouse.</title>
        <authorList>
            <person name="Church D.M."/>
            <person name="Goodstadt L."/>
            <person name="Hillier L.W."/>
            <person name="Zody M.C."/>
            <person name="Goldstein S."/>
            <person name="She X."/>
            <person name="Bult C.J."/>
            <person name="Agarwala R."/>
            <person name="Cherry J.L."/>
            <person name="DiCuccio M."/>
            <person name="Hlavina W."/>
            <person name="Kapustin Y."/>
            <person name="Meric P."/>
            <person name="Maglott D."/>
            <person name="Birtle Z."/>
            <person name="Marques A.C."/>
            <person name="Graves T."/>
            <person name="Zhou S."/>
            <person name="Teague B."/>
            <person name="Potamousis K."/>
            <person name="Churas C."/>
            <person name="Place M."/>
            <person name="Herschleb J."/>
            <person name="Runnheim R."/>
            <person name="Forrest D."/>
            <person name="Amos-Landgraf J."/>
            <person name="Schwartz D.C."/>
            <person name="Cheng Z."/>
            <person name="Lindblad-Toh K."/>
            <person name="Eichler E.E."/>
            <person name="Ponting C.P."/>
        </authorList>
    </citation>
    <scope>NUCLEOTIDE SEQUENCE [LARGE SCALE GENOMIC DNA]</scope>
    <source>
        <strain>C57BL/6J</strain>
    </source>
</reference>
<reference key="4">
    <citation type="journal article" date="2004" name="Genome Res.">
        <title>The status, quality, and expansion of the NIH full-length cDNA project: the Mammalian Gene Collection (MGC).</title>
        <authorList>
            <consortium name="The MGC Project Team"/>
        </authorList>
    </citation>
    <scope>NUCLEOTIDE SEQUENCE [LARGE SCALE MRNA]</scope>
</reference>
<reference key="5">
    <citation type="journal article" date="2010" name="Cell">
        <title>A tissue-specific atlas of mouse protein phosphorylation and expression.</title>
        <authorList>
            <person name="Huttlin E.L."/>
            <person name="Jedrychowski M.P."/>
            <person name="Elias J.E."/>
            <person name="Goswami T."/>
            <person name="Rad R."/>
            <person name="Beausoleil S.A."/>
            <person name="Villen J."/>
            <person name="Haas W."/>
            <person name="Sowa M.E."/>
            <person name="Gygi S.P."/>
        </authorList>
    </citation>
    <scope>PHOSPHORYLATION [LARGE SCALE ANALYSIS] AT SER-353 AND SER-406</scope>
    <scope>IDENTIFICATION BY MASS SPECTROMETRY [LARGE SCALE ANALYSIS]</scope>
    <source>
        <tissue>Brain</tissue>
        <tissue>Brown adipose tissue</tissue>
        <tissue>Heart</tissue>
        <tissue>Lung</tissue>
    </source>
</reference>
<evidence type="ECO:0000250" key="1">
    <source>
        <dbReference type="UniProtKB" id="P24054"/>
    </source>
</evidence>
<evidence type="ECO:0000255" key="2"/>
<evidence type="ECO:0000255" key="3">
    <source>
        <dbReference type="PROSITE-ProRule" id="PRU00448"/>
    </source>
</evidence>
<evidence type="ECO:0000255" key="4">
    <source>
        <dbReference type="PROSITE-ProRule" id="PRU00798"/>
    </source>
</evidence>
<evidence type="ECO:0000256" key="5">
    <source>
        <dbReference type="SAM" id="MobiDB-lite"/>
    </source>
</evidence>
<evidence type="ECO:0000305" key="6"/>
<evidence type="ECO:0007744" key="7">
    <source>
    </source>
</evidence>
<organism>
    <name type="scientific">Mus musculus</name>
    <name type="common">Mouse</name>
    <dbReference type="NCBI Taxonomy" id="10090"/>
    <lineage>
        <taxon>Eukaryota</taxon>
        <taxon>Metazoa</taxon>
        <taxon>Chordata</taxon>
        <taxon>Craniata</taxon>
        <taxon>Vertebrata</taxon>
        <taxon>Euteleostomi</taxon>
        <taxon>Mammalia</taxon>
        <taxon>Eutheria</taxon>
        <taxon>Euarchontoglires</taxon>
        <taxon>Glires</taxon>
        <taxon>Rodentia</taxon>
        <taxon>Myomorpha</taxon>
        <taxon>Muroidea</taxon>
        <taxon>Muridae</taxon>
        <taxon>Murinae</taxon>
        <taxon>Mus</taxon>
        <taxon>Mus</taxon>
    </lineage>
</organism>
<sequence>MKAVLLLLCALGTAVAIPTSTRFLSDHSNPTTATLVTPEDATVPIAGVEATADIENHPSDKAEKPSALNSEEETHEQSTEQDKTYSFEVDLKDEEDGDGDLSVDPTEGTLTLDLQEGTSEPQQKSLPENGDFPATVSTSYVDPNQRANITKGKESQEQPVSDSHQQPNESSKQTQDLKAEESQTQDPDIPNEEEEEEEDEEEEEEEEPEDIGAPSDNQEEGKEPLEEQPTSKWEGNREQSDDTLEESSQPTQISKTEKHQSEQGNQGQESDSEAEGEDKAAGSKEHIPHTEQQDQEGKAGLEAIGNQKDTDEKAVSTEPTDAAVVPRSHGGAGDNGGGDDSKHGAGDDYFIPSQEFLEAERMHSLSYYLKYGGGEETTTGESENRREAADNQEAKKAESSPNAEPSDEGNSREHSAGSCTNFQCKRGHICKTDPQGKPHCVCQDPETCPPAKILDQACGTDNQTYASSCHLFATKCRLEGTKKGHQLQLDYFGACKSIPACTDFEVAQFPLRMRDWLKNILMQLYEPNPKHGGYLNEKQRSKVKKIYLDEKRLLAGDHPIELLLRDFKKNYHMYVYPVHWQFNELDQHPADRILTHSELAPLRASLVPMEHCITRFFEECDPNKDKHITLKEWGHCFGIKEEDIDENLLF</sequence>
<comment type="subcellular location">
    <subcellularLocation>
        <location>Secreted</location>
        <location>Extracellular space</location>
        <location>Extracellular matrix</location>
    </subcellularLocation>
</comment>
<comment type="tissue specificity">
    <text>Highest expression in brain. Moderate levels in heart, adrenal gland, epididymis and lung. Low levels in kidney, eye, liver, spleen, submandibular gland and testis.</text>
</comment>
<comment type="similarity">
    <text evidence="6">Belongs to the SPARC family.</text>
</comment>
<keyword id="KW-0106">Calcium</keyword>
<keyword id="KW-1015">Disulfide bond</keyword>
<keyword id="KW-0272">Extracellular matrix</keyword>
<keyword id="KW-0325">Glycoprotein</keyword>
<keyword id="KW-0479">Metal-binding</keyword>
<keyword id="KW-0597">Phosphoprotein</keyword>
<keyword id="KW-1185">Reference proteome</keyword>
<keyword id="KW-0964">Secreted</keyword>
<keyword id="KW-0732">Signal</keyword>
<proteinExistence type="evidence at protein level"/>
<name>SPRL1_MOUSE</name>
<accession>P70663</accession>
<accession>E9QPH2</accession>
<accession>P97810</accession>
<accession>Q99L82</accession>